<keyword id="KW-0016">Alginate biosynthesis</keyword>
<keyword id="KW-0106">Calcium</keyword>
<keyword id="KW-0413">Isomerase</keyword>
<keyword id="KW-0677">Repeat</keyword>
<keyword id="KW-0964">Secreted</keyword>
<name>ALGE1_AZOVI</name>
<organism>
    <name type="scientific">Azotobacter vinelandii</name>
    <dbReference type="NCBI Taxonomy" id="354"/>
    <lineage>
        <taxon>Bacteria</taxon>
        <taxon>Pseudomonadati</taxon>
        <taxon>Pseudomonadota</taxon>
        <taxon>Gammaproteobacteria</taxon>
        <taxon>Pseudomonadales</taxon>
        <taxon>Pseudomonadaceae</taxon>
        <taxon>Azotobacter</taxon>
    </lineage>
</organism>
<evidence type="ECO:0000255" key="1"/>
<evidence type="ECO:0000256" key="2">
    <source>
        <dbReference type="SAM" id="MobiDB-lite"/>
    </source>
</evidence>
<evidence type="ECO:0000269" key="3">
    <source>
    </source>
</evidence>
<evidence type="ECO:0000269" key="4">
    <source>
    </source>
</evidence>
<evidence type="ECO:0000303" key="5">
    <source>
    </source>
</evidence>
<evidence type="ECO:0000305" key="6"/>
<feature type="chain" id="PRO_0000219555" description="Mannuronan C5-epimerase AlgE1">
    <location>
        <begin position="1"/>
        <end position="1403"/>
    </location>
</feature>
<feature type="repeat" description="PbH1 1" evidence="1">
    <location>
        <begin position="133"/>
        <end position="155"/>
    </location>
</feature>
<feature type="repeat" description="PbH1 2" evidence="1">
    <location>
        <begin position="157"/>
        <end position="179"/>
    </location>
</feature>
<feature type="repeat" description="PbH1 3" evidence="1">
    <location>
        <begin position="180"/>
        <end position="202"/>
    </location>
</feature>
<feature type="repeat" description="PbH1 4" evidence="1">
    <location>
        <begin position="204"/>
        <end position="226"/>
    </location>
</feature>
<feature type="repeat" description="PbH1 5" evidence="1">
    <location>
        <begin position="257"/>
        <end position="279"/>
    </location>
</feature>
<feature type="repeat" description="PbH1 6" evidence="1">
    <location>
        <begin position="280"/>
        <end position="302"/>
    </location>
</feature>
<feature type="repeat" description="PbH1 7" evidence="1">
    <location>
        <begin position="320"/>
        <end position="359"/>
    </location>
</feature>
<feature type="repeat" description="Hemolysin-type calcium-binding 1" evidence="1">
    <location>
        <begin position="388"/>
        <end position="403"/>
    </location>
</feature>
<feature type="repeat" description="Hemolysin-type calcium-binding 2" evidence="1">
    <location>
        <begin position="406"/>
        <end position="422"/>
    </location>
</feature>
<feature type="repeat" description="Hemolysin-type calcium-binding 3" evidence="1">
    <location>
        <begin position="424"/>
        <end position="440"/>
    </location>
</feature>
<feature type="repeat" description="Hemolysin-type calcium-binding 4" evidence="1">
    <location>
        <begin position="557"/>
        <end position="573"/>
    </location>
</feature>
<feature type="repeat" description="Hemolysin-type calcium-binding 5" evidence="1">
    <location>
        <begin position="574"/>
        <end position="591"/>
    </location>
</feature>
<feature type="repeat" description="Hemolysin-type calcium-binding 6" evidence="1">
    <location>
        <begin position="697"/>
        <end position="712"/>
    </location>
</feature>
<feature type="repeat" description="Hemolysin-type calcium-binding 7" evidence="1">
    <location>
        <begin position="716"/>
        <end position="732"/>
    </location>
</feature>
<feature type="repeat" description="Hemolysin-type calcium-binding 8" evidence="1">
    <location>
        <begin position="734"/>
        <end position="750"/>
    </location>
</feature>
<feature type="repeat" description="PbH1 8" evidence="1">
    <location>
        <begin position="977"/>
        <end position="999"/>
    </location>
</feature>
<feature type="repeat" description="PbH1 9" evidence="1">
    <location>
        <begin position="1001"/>
        <end position="1023"/>
    </location>
</feature>
<feature type="repeat" description="PbH1 10" evidence="1">
    <location>
        <begin position="1024"/>
        <end position="1046"/>
    </location>
</feature>
<feature type="repeat" description="PbH1 11" evidence="1">
    <location>
        <begin position="1048"/>
        <end position="1070"/>
    </location>
</feature>
<feature type="repeat" description="PbH1 12" evidence="1">
    <location>
        <begin position="1101"/>
        <end position="1123"/>
    </location>
</feature>
<feature type="repeat" description="PbH1 13" evidence="1">
    <location>
        <begin position="1124"/>
        <end position="1146"/>
    </location>
</feature>
<feature type="repeat" description="PbH1 14" evidence="1">
    <location>
        <begin position="1163"/>
        <end position="1185"/>
    </location>
</feature>
<feature type="repeat" description="PbH1 15" evidence="1">
    <location>
        <begin position="1190"/>
        <end position="1212"/>
    </location>
</feature>
<feature type="repeat" description="Hemolysin-type calcium-binding 9" evidence="1">
    <location>
        <begin position="1227"/>
        <end position="1243"/>
    </location>
</feature>
<feature type="repeat" description="Hemolysin-type calcium-binding 10" evidence="1">
    <location>
        <begin position="1244"/>
        <end position="1261"/>
    </location>
</feature>
<feature type="repeat" description="Hemolysin-type calcium-binding 11" evidence="1">
    <location>
        <begin position="1263"/>
        <end position="1279"/>
    </location>
</feature>
<feature type="region of interest" description="Disordered" evidence="2">
    <location>
        <begin position="372"/>
        <end position="395"/>
    </location>
</feature>
<feature type="region of interest" description="Disordered" evidence="2">
    <location>
        <begin position="408"/>
        <end position="428"/>
    </location>
</feature>
<reference key="1">
    <citation type="journal article" date="1995" name="Mol. Microbiol.">
        <title>A family of modular type mannuronan C-5-epimerase genes controls alginate structure in Azotobacter vinelandii.</title>
        <authorList>
            <person name="Ertesvaag H."/>
            <person name="Hoeidal H.K."/>
            <person name="Hals I.K."/>
            <person name="Rian A."/>
            <person name="Doseth B."/>
            <person name="Valla S."/>
        </authorList>
    </citation>
    <scope>NUCLEOTIDE SEQUENCE [GENOMIC DNA]</scope>
    <source>
        <strain>E</strain>
    </source>
</reference>
<reference key="2">
    <citation type="journal article" date="1998" name="J. Biol. Chem.">
        <title>The Azotobacter vinelandii mannuronan C-5-epimerase AlgE1 consists of two separate catalytic domains.</title>
        <authorList>
            <person name="Ertesvaag H."/>
            <person name="Hoeidal H.K."/>
            <person name="Skjaak-Braek G."/>
            <person name="Valla S."/>
        </authorList>
    </citation>
    <scope>FUNCTION</scope>
    <scope>CATALYTIC ACTIVITY</scope>
    <scope>COFACTOR</scope>
    <scope>ACTIVITY REGULATION</scope>
    <scope>DOMAINS</scope>
    <source>
        <strain>E</strain>
    </source>
</reference>
<reference key="3">
    <citation type="journal article" date="1999" name="J. Bacteriol.">
        <title>The A modules of the Azotobacter vinelandii mannuronan-C-5-epimerase AlgE1 are sufficient for both epimerization and binding of Ca2+.</title>
        <authorList>
            <person name="Ertesvaag H."/>
            <person name="Valla S."/>
        </authorList>
    </citation>
    <scope>DOMAINS</scope>
    <source>
        <strain>E</strain>
    </source>
</reference>
<reference key="4">
    <citation type="journal article" date="2000" name="Environ. Microbiol.">
        <title>Mannuronan C-5 epimerases and cellular differentiation of Azotobacter vinelandii.</title>
        <authorList>
            <person name="Hoeidal H.K."/>
            <person name="Glaerum Svanem B.I."/>
            <person name="Gimmestad M."/>
            <person name="Valla S."/>
        </authorList>
    </citation>
    <scope>EXPRESSION</scope>
    <source>
        <strain>E</strain>
    </source>
</reference>
<reference key="5">
    <citation type="journal article" date="1999" name="Metab. Eng.">
        <title>Mannuronan C-5-epimerases and their application for in vitro and in vivo design of new alginates useful in biotechnology.</title>
        <authorList>
            <person name="Ertesvaag H."/>
            <person name="Hoeidal H.K."/>
            <person name="Schjerven H."/>
            <person name="Glaerum Svanem B.I."/>
            <person name="Valla S."/>
        </authorList>
    </citation>
    <scope>REVIEW</scope>
</reference>
<accession>Q44494</accession>
<comment type="function">
    <text evidence="4">Converts beta-D-mannuronic acid (M) to alpha-L-guluronic acid (G), producing a polymer with gel-forming capacity, required for the formation of the cyst coat.</text>
</comment>
<comment type="catalytic activity">
    <reaction evidence="4">
        <text>[(1-&gt;4)-beta-D-mannuronosyl](n) = [alginate](n)</text>
        <dbReference type="Rhea" id="RHEA:45572"/>
        <dbReference type="Rhea" id="RHEA-COMP:11264"/>
        <dbReference type="Rhea" id="RHEA-COMP:11270"/>
        <dbReference type="ChEBI" id="CHEBI:58187"/>
        <dbReference type="ChEBI" id="CHEBI:85311"/>
        <dbReference type="EC" id="5.1.3.37"/>
    </reaction>
</comment>
<comment type="cofactor">
    <cofactor evidence="4">
        <name>Ca(2+)</name>
        <dbReference type="ChEBI" id="CHEBI:29108"/>
    </cofactor>
</comment>
<comment type="activity regulation">
    <text evidence="4">Inhibited by zinc.</text>
</comment>
<comment type="pathway">
    <text>Glycan biosynthesis; alginate biosynthesis.</text>
</comment>
<comment type="subcellular location">
    <subcellularLocation>
        <location>Secreted</location>
    </subcellularLocation>
    <text>Probably exported via the hemolysin-type secretion pathway.</text>
</comment>
<comment type="developmental stage">
    <text>Produced during vegetative growth and in encysting cells.</text>
</comment>
<comment type="domain">
    <text evidence="3 4">Composed of two catalytically active A modules and four R modules. The N-terminal A domain introduces a mixture of MG-blocks and G- blocks, whereas the C-terminal A domain only generates MG-blocks.</text>
</comment>
<comment type="miscellaneous">
    <text>Each enzyme of this family of C5 epimerases introduces its own characteristic sequence distribution of G-blocks in their substrates, explaining the extensive sequence variability of alginates. These alginates of varying composition have different physical properties and are necessary at different stages of the bacterium life cycle.</text>
</comment>
<comment type="similarity">
    <text evidence="6">Belongs to the D-mannuronate C5-epimerase family.</text>
</comment>
<gene>
    <name evidence="5" type="primary">algE1</name>
</gene>
<sequence length="1403" mass="147169">MDYNVKDFGALGDGVSDDTAAIQAAIDAAHAAGGGTVYLPAGEYRVSGGEEPSDGCLTIKSNVHIVGAGMGETVIKMVDGWTQNVTGMVRSAYGEETSNFGMSDLTLDGNRDNLSAKVDGWFNGYIPGQDGADRDVTLERVEIREMSGYGFDPHEQTINLTIRDSVAHDNSLDGFVADYQVGGVFENNVSYNNDRHGFNIVTSTNDFVLSNNVAYGNGGAGLVVQRGSYDLPHPYDILIDGGAYYDNALEGVQLKMAHDVTLQNAEIYGNGLYGVRVYGAQDVQILDNQIHDNSQNGAYAEVLLQSYDDTAGVSGNFYVTTGTWLEGNVISGSANSTYGIQERADGTDYSSLYANSIDGVQTGAVRLYGANSTVSSQSGSGQQATLEGSAGNDALSGTEAHETLLGQAGDDRLNGDAGNDILDGGAGRDNLTGGAGADTFRFSARTDSYRTDSASFNDLITDFDADEDSIDLSALGFTGLGDGYNGTLLLKTNAEGTRTYLKSYEADAQGRRFEIALDGNFTGLFNDNNLLFDAAPATGTEGSDNLLGTDAGETLLGYGGNDTLNGGAGDDILVGGAGRDSLTGGAGADVFRFDALSDSQRNYTTGDNQADRILDFDPTLDRIDVSALGFTGLGNGRNGTLAVVLNSAGDRTDLKSYDTDANGYSFELSLAGNYQGQLSAEQFVFATSQGGQMTIIEGTDGNDTLQGTEANERLLGLDGRDNLNGGAGDDILDGGAGRDTLTGGTGADTFLFSTRTDSYRTDSASFNDLITDFDPTQDRIDLSGLGFSGFGNGYDGTLLLQVNAAGTRTYLKSFEADANGQRFEIALDGDFSGQLDSGNVIFEPAVFNAKDFGALGDGASDDRPAIQAAIDAAYAAGGGTVYLPAGEYRVSPTGEPGDGCLMLKDGVYLAGDGIGETVIKLIDGSDQKITGMVRSAYGEETSNFGMSDLTLDGNRDNTSGKVDGWFNGYIPGQDGADRNVTIERVEIREMSGYGFDPHEQTINLTIRDSVAHDNGLDGFVADYLVDSVFENNVAYNNDRHGFNIVTSTYDFVMTNNVAYGNGGAGLTIQRGSEDLAQPTDILIDGGAYYDNALEGVLFKMTNNVTLQNAEIYGNGSSGVRLYGTEDVQILDNQIHDNSQNGTYPEVLLQAFDDSQVTGELYETLNTRIEGNLIDASDNANYAVRERDDGSDYTTLVDNDISGGQVASVQLSGAHSSLSGGTVEVPQGTDGNDVLVGSDANDQLYGGAGDDRLDGGAGDDLLDGGAGRDDLTGGTGADTFVFAARTDSYRTDAGVFNDLILDFDASEDRIDLSALGFSGFGDGYNGTLLVQLSSAGTRTYLKSYEEDLEGRRFEVALDGDHTGDLSAANVVFADDGSAAVASSDPAATQLEVVGSSGTQTDQLA</sequence>
<proteinExistence type="evidence at protein level"/>
<protein>
    <recommendedName>
        <fullName evidence="6">Mannuronan C5-epimerase AlgE1</fullName>
        <ecNumber evidence="4">5.1.3.37</ecNumber>
    </recommendedName>
    <alternativeName>
        <fullName>Poly(beta-D-mannuronate) C5 epimerase 1</fullName>
    </alternativeName>
</protein>
<dbReference type="EC" id="5.1.3.37" evidence="4"/>
<dbReference type="EMBL" id="L39096">
    <property type="protein sequence ID" value="AAA87311.1"/>
    <property type="molecule type" value="Genomic_DNA"/>
</dbReference>
<dbReference type="PIR" id="S77624">
    <property type="entry name" value="S77624"/>
</dbReference>
<dbReference type="SMR" id="Q44494"/>
<dbReference type="BRENDA" id="5.1.3.37">
    <property type="organism ID" value="49"/>
</dbReference>
<dbReference type="UniPathway" id="UPA00286"/>
<dbReference type="GO" id="GO:0005576">
    <property type="term" value="C:extracellular region"/>
    <property type="evidence" value="ECO:0007669"/>
    <property type="project" value="UniProtKB-SubCell"/>
</dbReference>
<dbReference type="GO" id="GO:0005509">
    <property type="term" value="F:calcium ion binding"/>
    <property type="evidence" value="ECO:0007669"/>
    <property type="project" value="InterPro"/>
</dbReference>
<dbReference type="GO" id="GO:0016853">
    <property type="term" value="F:isomerase activity"/>
    <property type="evidence" value="ECO:0007669"/>
    <property type="project" value="UniProtKB-KW"/>
</dbReference>
<dbReference type="GO" id="GO:0042121">
    <property type="term" value="P:alginic acid biosynthetic process"/>
    <property type="evidence" value="ECO:0007669"/>
    <property type="project" value="UniProtKB-UniPathway"/>
</dbReference>
<dbReference type="Gene3D" id="2.150.10.10">
    <property type="entry name" value="Serralysin-like metalloprotease, C-terminal"/>
    <property type="match status" value="3"/>
</dbReference>
<dbReference type="Gene3D" id="2.160.20.10">
    <property type="entry name" value="Single-stranded right-handed beta-helix, Pectin lyase-like"/>
    <property type="match status" value="2"/>
</dbReference>
<dbReference type="InterPro" id="IPR039448">
    <property type="entry name" value="Beta_helix"/>
</dbReference>
<dbReference type="InterPro" id="IPR006633">
    <property type="entry name" value="Carb-bd_sugar_hydrolysis-dom"/>
</dbReference>
<dbReference type="InterPro" id="IPR018511">
    <property type="entry name" value="Hemolysin-typ_Ca-bd_CS"/>
</dbReference>
<dbReference type="InterPro" id="IPR001343">
    <property type="entry name" value="Hemolysn_Ca-bd"/>
</dbReference>
<dbReference type="InterPro" id="IPR006626">
    <property type="entry name" value="PbH1"/>
</dbReference>
<dbReference type="InterPro" id="IPR012334">
    <property type="entry name" value="Pectin_lyas_fold"/>
</dbReference>
<dbReference type="InterPro" id="IPR011050">
    <property type="entry name" value="Pectin_lyase_fold/virulence"/>
</dbReference>
<dbReference type="InterPro" id="IPR024535">
    <property type="entry name" value="RHGA/B-epi-like_pectate_lyase"/>
</dbReference>
<dbReference type="InterPro" id="IPR050557">
    <property type="entry name" value="RTX_toxin/Mannuronan_C5-epim"/>
</dbReference>
<dbReference type="InterPro" id="IPR011049">
    <property type="entry name" value="Serralysin-like_metalloprot_C"/>
</dbReference>
<dbReference type="PANTHER" id="PTHR38340">
    <property type="entry name" value="S-LAYER PROTEIN"/>
    <property type="match status" value="1"/>
</dbReference>
<dbReference type="PANTHER" id="PTHR38340:SF1">
    <property type="entry name" value="S-LAYER PROTEIN"/>
    <property type="match status" value="1"/>
</dbReference>
<dbReference type="Pfam" id="PF13229">
    <property type="entry name" value="Beta_helix"/>
    <property type="match status" value="2"/>
</dbReference>
<dbReference type="Pfam" id="PF00353">
    <property type="entry name" value="HemolysinCabind"/>
    <property type="match status" value="4"/>
</dbReference>
<dbReference type="Pfam" id="PF12708">
    <property type="entry name" value="Pect-lyase_RHGA_epim"/>
    <property type="match status" value="2"/>
</dbReference>
<dbReference type="PRINTS" id="PR00313">
    <property type="entry name" value="CABNDNGRPT"/>
</dbReference>
<dbReference type="SMART" id="SM00722">
    <property type="entry name" value="CASH"/>
    <property type="match status" value="4"/>
</dbReference>
<dbReference type="SMART" id="SM00710">
    <property type="entry name" value="PbH1"/>
    <property type="match status" value="15"/>
</dbReference>
<dbReference type="SUPFAM" id="SSF51120">
    <property type="entry name" value="beta-Roll"/>
    <property type="match status" value="4"/>
</dbReference>
<dbReference type="SUPFAM" id="SSF51126">
    <property type="entry name" value="Pectin lyase-like"/>
    <property type="match status" value="2"/>
</dbReference>
<dbReference type="PROSITE" id="PS00330">
    <property type="entry name" value="HEMOLYSIN_CALCIUM"/>
    <property type="match status" value="9"/>
</dbReference>